<gene>
    <name evidence="1" type="primary">rpsH</name>
    <name type="ordered locus">Rpal_3653</name>
</gene>
<organism>
    <name type="scientific">Rhodopseudomonas palustris (strain TIE-1)</name>
    <dbReference type="NCBI Taxonomy" id="395960"/>
    <lineage>
        <taxon>Bacteria</taxon>
        <taxon>Pseudomonadati</taxon>
        <taxon>Pseudomonadota</taxon>
        <taxon>Alphaproteobacteria</taxon>
        <taxon>Hyphomicrobiales</taxon>
        <taxon>Nitrobacteraceae</taxon>
        <taxon>Rhodopseudomonas</taxon>
    </lineage>
</organism>
<name>RS8_RHOPT</name>
<keyword id="KW-0687">Ribonucleoprotein</keyword>
<keyword id="KW-0689">Ribosomal protein</keyword>
<keyword id="KW-0694">RNA-binding</keyword>
<keyword id="KW-0699">rRNA-binding</keyword>
<proteinExistence type="inferred from homology"/>
<reference key="1">
    <citation type="submission" date="2008-05" db="EMBL/GenBank/DDBJ databases">
        <title>Complete sequence of Rhodopseudomonas palustris TIE-1.</title>
        <authorList>
            <consortium name="US DOE Joint Genome Institute"/>
            <person name="Lucas S."/>
            <person name="Copeland A."/>
            <person name="Lapidus A."/>
            <person name="Glavina del Rio T."/>
            <person name="Dalin E."/>
            <person name="Tice H."/>
            <person name="Pitluck S."/>
            <person name="Chain P."/>
            <person name="Malfatti S."/>
            <person name="Shin M."/>
            <person name="Vergez L."/>
            <person name="Lang D."/>
            <person name="Schmutz J."/>
            <person name="Larimer F."/>
            <person name="Land M."/>
            <person name="Hauser L."/>
            <person name="Kyrpides N."/>
            <person name="Mikhailova N."/>
            <person name="Emerson D."/>
            <person name="Newman D.K."/>
            <person name="Roden E."/>
            <person name="Richardson P."/>
        </authorList>
    </citation>
    <scope>NUCLEOTIDE SEQUENCE [LARGE SCALE GENOMIC DNA]</scope>
    <source>
        <strain>TIE-1</strain>
    </source>
</reference>
<feature type="chain" id="PRO_1000140603" description="Small ribosomal subunit protein uS8">
    <location>
        <begin position="1"/>
        <end position="132"/>
    </location>
</feature>
<sequence>MSTHDPISDLITRIRNAQMRSKSKVSTPGSKMRANVLDVLKAEGYIRGYATVEHPSGRSELEIELKYFDGEPVIREIERVSRPGRRVYASVKNLPRVNNGLGISVLSTPKGIMADHDARDANVGGEVLFTVF</sequence>
<accession>B3QBW6</accession>
<evidence type="ECO:0000255" key="1">
    <source>
        <dbReference type="HAMAP-Rule" id="MF_01302"/>
    </source>
</evidence>
<evidence type="ECO:0000305" key="2"/>
<protein>
    <recommendedName>
        <fullName evidence="1">Small ribosomal subunit protein uS8</fullName>
    </recommendedName>
    <alternativeName>
        <fullName evidence="2">30S ribosomal protein S8</fullName>
    </alternativeName>
</protein>
<dbReference type="EMBL" id="CP001096">
    <property type="protein sequence ID" value="ACF02153.1"/>
    <property type="molecule type" value="Genomic_DNA"/>
</dbReference>
<dbReference type="RefSeq" id="WP_011158781.1">
    <property type="nucleotide sequence ID" value="NC_011004.1"/>
</dbReference>
<dbReference type="SMR" id="B3QBW6"/>
<dbReference type="GeneID" id="66894322"/>
<dbReference type="KEGG" id="rpt:Rpal_3653"/>
<dbReference type="HOGENOM" id="CLU_098428_0_0_5"/>
<dbReference type="OrthoDB" id="9802617at2"/>
<dbReference type="Proteomes" id="UP000001725">
    <property type="component" value="Chromosome"/>
</dbReference>
<dbReference type="GO" id="GO:1990904">
    <property type="term" value="C:ribonucleoprotein complex"/>
    <property type="evidence" value="ECO:0007669"/>
    <property type="project" value="UniProtKB-KW"/>
</dbReference>
<dbReference type="GO" id="GO:0005840">
    <property type="term" value="C:ribosome"/>
    <property type="evidence" value="ECO:0007669"/>
    <property type="project" value="UniProtKB-KW"/>
</dbReference>
<dbReference type="GO" id="GO:0019843">
    <property type="term" value="F:rRNA binding"/>
    <property type="evidence" value="ECO:0007669"/>
    <property type="project" value="UniProtKB-UniRule"/>
</dbReference>
<dbReference type="GO" id="GO:0003735">
    <property type="term" value="F:structural constituent of ribosome"/>
    <property type="evidence" value="ECO:0007669"/>
    <property type="project" value="InterPro"/>
</dbReference>
<dbReference type="GO" id="GO:0006412">
    <property type="term" value="P:translation"/>
    <property type="evidence" value="ECO:0007669"/>
    <property type="project" value="UniProtKB-UniRule"/>
</dbReference>
<dbReference type="FunFam" id="3.30.1370.30:FF:000002">
    <property type="entry name" value="30S ribosomal protein S8"/>
    <property type="match status" value="1"/>
</dbReference>
<dbReference type="FunFam" id="3.30.1490.10:FF:000001">
    <property type="entry name" value="30S ribosomal protein S8"/>
    <property type="match status" value="1"/>
</dbReference>
<dbReference type="Gene3D" id="3.30.1370.30">
    <property type="match status" value="1"/>
</dbReference>
<dbReference type="Gene3D" id="3.30.1490.10">
    <property type="match status" value="1"/>
</dbReference>
<dbReference type="HAMAP" id="MF_01302_B">
    <property type="entry name" value="Ribosomal_uS8_B"/>
    <property type="match status" value="1"/>
</dbReference>
<dbReference type="InterPro" id="IPR000630">
    <property type="entry name" value="Ribosomal_uS8"/>
</dbReference>
<dbReference type="InterPro" id="IPR047863">
    <property type="entry name" value="Ribosomal_uS8_CS"/>
</dbReference>
<dbReference type="InterPro" id="IPR035987">
    <property type="entry name" value="Ribosomal_uS8_sf"/>
</dbReference>
<dbReference type="NCBIfam" id="NF001109">
    <property type="entry name" value="PRK00136.1"/>
    <property type="match status" value="1"/>
</dbReference>
<dbReference type="PANTHER" id="PTHR11758">
    <property type="entry name" value="40S RIBOSOMAL PROTEIN S15A"/>
    <property type="match status" value="1"/>
</dbReference>
<dbReference type="Pfam" id="PF00410">
    <property type="entry name" value="Ribosomal_S8"/>
    <property type="match status" value="1"/>
</dbReference>
<dbReference type="SUPFAM" id="SSF56047">
    <property type="entry name" value="Ribosomal protein S8"/>
    <property type="match status" value="1"/>
</dbReference>
<dbReference type="PROSITE" id="PS00053">
    <property type="entry name" value="RIBOSOMAL_S8"/>
    <property type="match status" value="1"/>
</dbReference>
<comment type="function">
    <text evidence="1">One of the primary rRNA binding proteins, it binds directly to 16S rRNA central domain where it helps coordinate assembly of the platform of the 30S subunit.</text>
</comment>
<comment type="subunit">
    <text evidence="1">Part of the 30S ribosomal subunit. Contacts proteins S5 and S12.</text>
</comment>
<comment type="similarity">
    <text evidence="1">Belongs to the universal ribosomal protein uS8 family.</text>
</comment>